<accession>Q16658</accession>
<accession>A6NI89</accession>
<accession>B2RE97</accession>
<accession>Q96IC5</accession>
<accession>Q96IH1</accession>
<accession>Q9BRF1</accession>
<sequence>MTANGTAEAVQIQFGLINCGNKYLTAEAFGFKVNASASSLKKKQIWTLEQPPDEAGSAAVCLRSHLGRYLAADKDGNVTCEREVPGPDCRFLIVAHDDGRWSLQSEAHRRYFGGTEDRLSCFAQTVSPAEKWSVHIAMHPQVNIYSVTRKRYAHLSARPADEIAVDRDVPWGVDSLITLAFQDQRYSVQTADHRFLRHDGRLVARPEPATGYTLEFRSGKVAFRDCEGRYLAPSGPSGTLKAGKATKVGKDELFALEQSCAQVVLQAANERNVSTRQGMDLSANQDEETDQETFQLEIDRDTKKCAFRTHTGKYWTLTATGGVQSTASSKNASCYFDIEWRDRRITLRASNGKFVTSKKNGQLAASVETAGDSELFLMKLINRPIIVFRGEHGFIGCRKVTGTLDANRSSYDVFQLEFNDGAYNIKDSTGKYWTVGSDSAVTSSGDTPVDFFFEFCDYNKVAIKVGGRYLKGDHAGVLKASAETVDPASLWEY</sequence>
<comment type="function">
    <text evidence="3 4 6 8 9 13 14">Actin-binding protein that contains 2 major actin binding sites (PubMed:21685497, PubMed:23184945). Organizes filamentous actin into parallel bundles (PubMed:20393565, PubMed:21685497, PubMed:23184945). Plays a role in the organization of actin filament bundles and the formation of microspikes, membrane ruffles, and stress fibers (PubMed:22155786). Important for the formation of a diverse set of cell protrusions, such as filopodia, and for cell motility and migration (PubMed:20393565, PubMed:21685497, PubMed:23184945). Mediates reorganization of the actin cytoskeleton and axon growth cone collapse in response to NGF (PubMed:22155786).</text>
</comment>
<comment type="subunit">
    <text evidence="1 2 7">Interacts with RUFY3 (via N-terminus); the interaction induces neuron axon development (By similarity). Interacts with NGFR (By similarity). Associates with CTNNB1 (By similarity). Interacts with PLXNB3 (PubMed:21706053).</text>
</comment>
<comment type="interaction">
    <interactant intactId="EBI-351076">
        <id>Q16658</id>
    </interactant>
    <interactant intactId="EBI-359343">
        <id>Q9BXW9</id>
        <label>FANCD2</label>
    </interactant>
    <organismsDiffer>false</organismsDiffer>
    <experiments>6</experiments>
</comment>
<comment type="interaction">
    <interactant intactId="EBI-351076">
        <id>Q16658</id>
    </interactant>
    <interactant intactId="EBI-744248">
        <id>P40692</id>
        <label>MLH1</label>
    </interactant>
    <organismsDiffer>false</organismsDiffer>
    <experiments>7</experiments>
</comment>
<comment type="interaction">
    <interactant intactId="EBI-351076">
        <id>Q16658</id>
    </interactant>
    <interactant intactId="EBI-311073">
        <id>Q9ULL4</id>
        <label>PLXNB3</label>
    </interactant>
    <organismsDiffer>false</organismsDiffer>
    <experiments>2</experiments>
</comment>
<comment type="interaction">
    <interactant intactId="EBI-351076">
        <id>Q16658</id>
    </interactant>
    <interactant intactId="EBI-347088">
        <id>P63104</id>
        <label>YWHAZ</label>
    </interactant>
    <organismsDiffer>false</organismsDiffer>
    <experiments>3</experiments>
</comment>
<comment type="subcellular location">
    <subcellularLocation>
        <location evidence="7 14">Cytoplasm</location>
        <location evidence="7 14">Cytosol</location>
    </subcellularLocation>
    <subcellularLocation>
        <location evidence="6">Cytoplasm</location>
        <location evidence="6">Cell cortex</location>
    </subcellularLocation>
    <subcellularLocation>
        <location evidence="6 10 14">Cytoplasm</location>
        <location evidence="6 10 14">Cytoskeleton</location>
    </subcellularLocation>
    <subcellularLocation>
        <location evidence="7">Cytoplasm</location>
        <location evidence="7">Cytoskeleton</location>
        <location evidence="7">Stress fiber</location>
    </subcellularLocation>
    <subcellularLocation>
        <location evidence="3 6 10">Cell projection</location>
        <location evidence="3 6 10">Filopodium</location>
    </subcellularLocation>
    <subcellularLocation>
        <location evidence="3">Cell projection</location>
        <location evidence="3">Invadopodium</location>
    </subcellularLocation>
    <subcellularLocation>
        <location evidence="14">Cell projection</location>
        <location evidence="14">Microvillus</location>
    </subcellularLocation>
    <subcellularLocation>
        <location evidence="14">Cell junction</location>
    </subcellularLocation>
    <text evidence="2 7">Colocalized with RUFY3 and F-actin at filipodia of the axonal growth cone. Colocalized with DBN1 and F-actin at the transitional domain of the axonal growth cone (By similarity).</text>
</comment>
<comment type="tissue specificity">
    <text>Ubiquitous.</text>
</comment>
<comment type="domain">
    <text evidence="4 5 6 9">Composed of four fascin beta-trefoil domains.</text>
</comment>
<comment type="PTM">
    <text evidence="8 11 12">Phosphorylation at Ser-39 inhibits actin-binding (PubMed:8647875, PubMed:8999969). Phosphorylation is required for the reorganization of the actin cytoskeleton in response to NGF (PubMed:22155786).</text>
</comment>
<comment type="similarity">
    <text evidence="16">Belongs to the fascin family.</text>
</comment>
<comment type="sequence caution" evidence="16">
    <conflict type="erroneous initiation">
        <sequence resource="EMBL-CDS" id="AAH07539"/>
    </conflict>
    <text>Extended N-terminus.</text>
</comment>
<comment type="online information" name="Atlas of Genetics and Cytogenetics in Oncology and Haematology">
    <link uri="https://atlasgeneticsoncology.org/gene/44342/FSCN1"/>
</comment>
<name>FSCN1_HUMAN</name>
<dbReference type="EMBL" id="U03057">
    <property type="protein sequence ID" value="AAA86442.1"/>
    <property type="molecule type" value="mRNA"/>
</dbReference>
<dbReference type="EMBL" id="U09873">
    <property type="protein sequence ID" value="AAA62201.1"/>
    <property type="molecule type" value="mRNA"/>
</dbReference>
<dbReference type="EMBL" id="AY044229">
    <property type="protein sequence ID" value="AAL01526.1"/>
    <property type="molecule type" value="Genomic_DNA"/>
</dbReference>
<dbReference type="EMBL" id="AK316607">
    <property type="protein sequence ID" value="BAG38194.1"/>
    <property type="molecule type" value="mRNA"/>
</dbReference>
<dbReference type="EMBL" id="BT006636">
    <property type="protein sequence ID" value="AAP35282.1"/>
    <property type="molecule type" value="mRNA"/>
</dbReference>
<dbReference type="EMBL" id="AC006483">
    <property type="status" value="NOT_ANNOTATED_CDS"/>
    <property type="molecule type" value="Genomic_DNA"/>
</dbReference>
<dbReference type="EMBL" id="CH471144">
    <property type="protein sequence ID" value="EAW87346.1"/>
    <property type="molecule type" value="Genomic_DNA"/>
</dbReference>
<dbReference type="EMBL" id="BC000521">
    <property type="protein sequence ID" value="AAH00521.1"/>
    <property type="molecule type" value="mRNA"/>
</dbReference>
<dbReference type="EMBL" id="BC006304">
    <property type="protein sequence ID" value="AAH06304.1"/>
    <property type="molecule type" value="mRNA"/>
</dbReference>
<dbReference type="EMBL" id="BC007539">
    <property type="protein sequence ID" value="AAH07539.1"/>
    <property type="status" value="ALT_INIT"/>
    <property type="molecule type" value="mRNA"/>
</dbReference>
<dbReference type="EMBL" id="BC007643">
    <property type="protein sequence ID" value="AAH07643.1"/>
    <property type="molecule type" value="mRNA"/>
</dbReference>
<dbReference type="EMBL" id="BC007948">
    <property type="protein sequence ID" value="AAH07948.1"/>
    <property type="molecule type" value="mRNA"/>
</dbReference>
<dbReference type="EMBL" id="BC007988">
    <property type="protein sequence ID" value="AAH07988.1"/>
    <property type="molecule type" value="mRNA"/>
</dbReference>
<dbReference type="CCDS" id="CCDS5342.1"/>
<dbReference type="PIR" id="I38621">
    <property type="entry name" value="I38621"/>
</dbReference>
<dbReference type="RefSeq" id="NP_003079.1">
    <property type="nucleotide sequence ID" value="NM_003088.4"/>
</dbReference>
<dbReference type="PDB" id="1DFC">
    <property type="method" value="X-ray"/>
    <property type="resolution" value="2.90 A"/>
    <property type="chains" value="A/B=1-493"/>
</dbReference>
<dbReference type="PDB" id="3LLP">
    <property type="method" value="X-ray"/>
    <property type="resolution" value="1.80 A"/>
    <property type="chains" value="A/B=1-493"/>
</dbReference>
<dbReference type="PDB" id="3P53">
    <property type="method" value="X-ray"/>
    <property type="resolution" value="2.00 A"/>
    <property type="chains" value="A/B=1-493"/>
</dbReference>
<dbReference type="PDB" id="4GOV">
    <property type="method" value="X-ray"/>
    <property type="resolution" value="2.20 A"/>
    <property type="chains" value="A/B=1-493"/>
</dbReference>
<dbReference type="PDB" id="4GOY">
    <property type="method" value="X-ray"/>
    <property type="resolution" value="2.30 A"/>
    <property type="chains" value="A/B=1-493"/>
</dbReference>
<dbReference type="PDB" id="4GP0">
    <property type="method" value="X-ray"/>
    <property type="resolution" value="2.50 A"/>
    <property type="chains" value="A/B=1-493"/>
</dbReference>
<dbReference type="PDB" id="4GP3">
    <property type="method" value="X-ray"/>
    <property type="resolution" value="2.25 A"/>
    <property type="chains" value="A/B=1-493"/>
</dbReference>
<dbReference type="PDB" id="6B0T">
    <property type="method" value="X-ray"/>
    <property type="resolution" value="2.80 A"/>
    <property type="chains" value="A/B/C/D/E/F=7-493"/>
</dbReference>
<dbReference type="PDB" id="6I0Z">
    <property type="method" value="X-ray"/>
    <property type="resolution" value="1.77 A"/>
    <property type="chains" value="A/B=1-493"/>
</dbReference>
<dbReference type="PDB" id="6I10">
    <property type="method" value="X-ray"/>
    <property type="resolution" value="2.10 A"/>
    <property type="chains" value="A=1-493"/>
</dbReference>
<dbReference type="PDB" id="6I11">
    <property type="method" value="X-ray"/>
    <property type="resolution" value="1.67 A"/>
    <property type="chains" value="A=1-493"/>
</dbReference>
<dbReference type="PDB" id="6I12">
    <property type="method" value="X-ray"/>
    <property type="resolution" value="1.65 A"/>
    <property type="chains" value="A=1-493"/>
</dbReference>
<dbReference type="PDB" id="6I13">
    <property type="method" value="X-ray"/>
    <property type="resolution" value="1.79 A"/>
    <property type="chains" value="A=1-493"/>
</dbReference>
<dbReference type="PDB" id="6I14">
    <property type="method" value="X-ray"/>
    <property type="resolution" value="1.73 A"/>
    <property type="chains" value="A=1-493"/>
</dbReference>
<dbReference type="PDB" id="6I15">
    <property type="method" value="X-ray"/>
    <property type="resolution" value="1.91 A"/>
    <property type="chains" value="A=1-493"/>
</dbReference>
<dbReference type="PDB" id="6I16">
    <property type="method" value="X-ray"/>
    <property type="resolution" value="2.00 A"/>
    <property type="chains" value="A=1-493"/>
</dbReference>
<dbReference type="PDB" id="6I17">
    <property type="method" value="X-ray"/>
    <property type="resolution" value="1.56 A"/>
    <property type="chains" value="A=1-493"/>
</dbReference>
<dbReference type="PDB" id="6I18">
    <property type="method" value="X-ray"/>
    <property type="resolution" value="1.49 A"/>
    <property type="chains" value="A=1-493"/>
</dbReference>
<dbReference type="PDB" id="7ZAU">
    <property type="method" value="X-ray"/>
    <property type="resolution" value="2.20 A"/>
    <property type="chains" value="A/C/E/G=1-493"/>
</dbReference>
<dbReference type="PDB" id="8VO5">
    <property type="method" value="EM"/>
    <property type="resolution" value="3.00 A"/>
    <property type="chains" value="A=1-493"/>
</dbReference>
<dbReference type="PDB" id="8VO6">
    <property type="method" value="EM"/>
    <property type="resolution" value="3.10 A"/>
    <property type="chains" value="A=1-493"/>
</dbReference>
<dbReference type="PDB" id="8VO7">
    <property type="method" value="EM"/>
    <property type="resolution" value="3.10 A"/>
    <property type="chains" value="A=1-493"/>
</dbReference>
<dbReference type="PDB" id="8VO8">
    <property type="method" value="EM"/>
    <property type="resolution" value="3.90 A"/>
    <property type="chains" value="A=1-493"/>
</dbReference>
<dbReference type="PDB" id="8VO9">
    <property type="method" value="EM"/>
    <property type="resolution" value="3.40 A"/>
    <property type="chains" value="A=1-493"/>
</dbReference>
<dbReference type="PDB" id="8VOA">
    <property type="method" value="EM"/>
    <property type="resolution" value="4.00 A"/>
    <property type="chains" value="A=1-493"/>
</dbReference>
<dbReference type="PDBsum" id="1DFC"/>
<dbReference type="PDBsum" id="3LLP"/>
<dbReference type="PDBsum" id="3P53"/>
<dbReference type="PDBsum" id="4GOV"/>
<dbReference type="PDBsum" id="4GOY"/>
<dbReference type="PDBsum" id="4GP0"/>
<dbReference type="PDBsum" id="4GP3"/>
<dbReference type="PDBsum" id="6B0T"/>
<dbReference type="PDBsum" id="6I0Z"/>
<dbReference type="PDBsum" id="6I10"/>
<dbReference type="PDBsum" id="6I11"/>
<dbReference type="PDBsum" id="6I12"/>
<dbReference type="PDBsum" id="6I13"/>
<dbReference type="PDBsum" id="6I14"/>
<dbReference type="PDBsum" id="6I15"/>
<dbReference type="PDBsum" id="6I16"/>
<dbReference type="PDBsum" id="6I17"/>
<dbReference type="PDBsum" id="6I18"/>
<dbReference type="PDBsum" id="7ZAU"/>
<dbReference type="PDBsum" id="8VO5"/>
<dbReference type="PDBsum" id="8VO6"/>
<dbReference type="PDBsum" id="8VO7"/>
<dbReference type="PDBsum" id="8VO8"/>
<dbReference type="PDBsum" id="8VO9"/>
<dbReference type="PDBsum" id="8VOA"/>
<dbReference type="EMDB" id="EMD-43364"/>
<dbReference type="EMDB" id="EMD-43365"/>
<dbReference type="EMDB" id="EMD-43366"/>
<dbReference type="EMDB" id="EMD-43367"/>
<dbReference type="EMDB" id="EMD-43368"/>
<dbReference type="EMDB" id="EMD-43369"/>
<dbReference type="SMR" id="Q16658"/>
<dbReference type="BioGRID" id="112508">
    <property type="interactions" value="316"/>
</dbReference>
<dbReference type="DIP" id="DIP-33171N"/>
<dbReference type="FunCoup" id="Q16658">
    <property type="interactions" value="469"/>
</dbReference>
<dbReference type="IntAct" id="Q16658">
    <property type="interactions" value="73"/>
</dbReference>
<dbReference type="MINT" id="Q16658"/>
<dbReference type="STRING" id="9606.ENSP00000371798"/>
<dbReference type="BindingDB" id="Q16658"/>
<dbReference type="ChEMBL" id="CHEMBL4523304"/>
<dbReference type="DrugBank" id="DB14995">
    <property type="generic name" value="NP-G2-044"/>
</dbReference>
<dbReference type="GlyGen" id="Q16658">
    <property type="glycosylation" value="3 sites, 1 N-linked glycan (2 sites), 1 O-linked glycan (1 site)"/>
</dbReference>
<dbReference type="iPTMnet" id="Q16658"/>
<dbReference type="MetOSite" id="Q16658"/>
<dbReference type="PhosphoSitePlus" id="Q16658"/>
<dbReference type="SwissPalm" id="Q16658"/>
<dbReference type="BioMuta" id="FSCN1"/>
<dbReference type="DMDM" id="2498357"/>
<dbReference type="REPRODUCTION-2DPAGE" id="IPI00163187"/>
<dbReference type="REPRODUCTION-2DPAGE" id="Q16658"/>
<dbReference type="CPTAC" id="CPTAC-1403"/>
<dbReference type="CPTAC" id="CPTAC-1404"/>
<dbReference type="CPTAC" id="CPTAC-1405"/>
<dbReference type="CPTAC" id="CPTAC-1406"/>
<dbReference type="CPTAC" id="CPTAC-373"/>
<dbReference type="CPTAC" id="CPTAC-709"/>
<dbReference type="jPOST" id="Q16658"/>
<dbReference type="MassIVE" id="Q16658"/>
<dbReference type="PaxDb" id="9606-ENSP00000371798"/>
<dbReference type="PeptideAtlas" id="Q16658"/>
<dbReference type="ProteomicsDB" id="61017"/>
<dbReference type="Pumba" id="Q16658"/>
<dbReference type="ABCD" id="Q16658">
    <property type="antibodies" value="1 sequenced antibody"/>
</dbReference>
<dbReference type="Antibodypedia" id="1483">
    <property type="antibodies" value="916 antibodies from 45 providers"/>
</dbReference>
<dbReference type="CPTC" id="Q16658">
    <property type="antibodies" value="4 antibodies"/>
</dbReference>
<dbReference type="DNASU" id="6624"/>
<dbReference type="Ensembl" id="ENST00000382361.8">
    <property type="protein sequence ID" value="ENSP00000371798.3"/>
    <property type="gene ID" value="ENSG00000075618.18"/>
</dbReference>
<dbReference type="GeneID" id="6624"/>
<dbReference type="KEGG" id="hsa:6624"/>
<dbReference type="MANE-Select" id="ENST00000382361.8">
    <property type="protein sequence ID" value="ENSP00000371798.3"/>
    <property type="RefSeq nucleotide sequence ID" value="NM_003088.4"/>
    <property type="RefSeq protein sequence ID" value="NP_003079.1"/>
</dbReference>
<dbReference type="UCSC" id="uc003sou.4">
    <property type="organism name" value="human"/>
</dbReference>
<dbReference type="AGR" id="HGNC:11148"/>
<dbReference type="CTD" id="6624"/>
<dbReference type="DisGeNET" id="6624"/>
<dbReference type="GeneCards" id="FSCN1"/>
<dbReference type="HGNC" id="HGNC:11148">
    <property type="gene designation" value="FSCN1"/>
</dbReference>
<dbReference type="HPA" id="ENSG00000075618">
    <property type="expression patterns" value="Low tissue specificity"/>
</dbReference>
<dbReference type="MIM" id="602689">
    <property type="type" value="gene"/>
</dbReference>
<dbReference type="neXtProt" id="NX_Q16658"/>
<dbReference type="OpenTargets" id="ENSG00000075618"/>
<dbReference type="PharmGKB" id="PA128394534"/>
<dbReference type="VEuPathDB" id="HostDB:ENSG00000075618"/>
<dbReference type="eggNOG" id="ENOG502QPRX">
    <property type="taxonomic scope" value="Eukaryota"/>
</dbReference>
<dbReference type="GeneTree" id="ENSGT00950000183157"/>
<dbReference type="HOGENOM" id="CLU_030960_2_0_1"/>
<dbReference type="InParanoid" id="Q16658"/>
<dbReference type="OMA" id="SMTRKRY"/>
<dbReference type="OrthoDB" id="10259868at2759"/>
<dbReference type="PAN-GO" id="Q16658">
    <property type="GO annotations" value="12 GO annotations based on evolutionary models"/>
</dbReference>
<dbReference type="PhylomeDB" id="Q16658"/>
<dbReference type="TreeFam" id="TF323992"/>
<dbReference type="PathwayCommons" id="Q16658"/>
<dbReference type="Reactome" id="R-HSA-6785807">
    <property type="pathway name" value="Interleukin-4 and Interleukin-13 signaling"/>
</dbReference>
<dbReference type="SignaLink" id="Q16658"/>
<dbReference type="SIGNOR" id="Q16658"/>
<dbReference type="BioGRID-ORCS" id="6624">
    <property type="hits" value="8 hits in 1158 CRISPR screens"/>
</dbReference>
<dbReference type="CD-CODE" id="DEE660B4">
    <property type="entry name" value="Stress granule"/>
</dbReference>
<dbReference type="CD-CODE" id="FB4E32DD">
    <property type="entry name" value="Presynaptic clusters and postsynaptic densities"/>
</dbReference>
<dbReference type="ChiTaRS" id="FSCN1">
    <property type="organism name" value="human"/>
</dbReference>
<dbReference type="EvolutionaryTrace" id="Q16658"/>
<dbReference type="GeneWiki" id="FSCN1"/>
<dbReference type="GenomeRNAi" id="6624"/>
<dbReference type="Pharos" id="Q16658">
    <property type="development level" value="Tchem"/>
</dbReference>
<dbReference type="PRO" id="PR:Q16658"/>
<dbReference type="Proteomes" id="UP000005640">
    <property type="component" value="Chromosome 7"/>
</dbReference>
<dbReference type="RNAct" id="Q16658">
    <property type="molecule type" value="protein"/>
</dbReference>
<dbReference type="Bgee" id="ENSG00000075618">
    <property type="expression patterns" value="Expressed in stromal cell of endometrium and 186 other cell types or tissues"/>
</dbReference>
<dbReference type="ExpressionAtlas" id="Q16658">
    <property type="expression patterns" value="baseline and differential"/>
</dbReference>
<dbReference type="GO" id="GO:0015629">
    <property type="term" value="C:actin cytoskeleton"/>
    <property type="evidence" value="ECO:0000314"/>
    <property type="project" value="UniProtKB"/>
</dbReference>
<dbReference type="GO" id="GO:0005938">
    <property type="term" value="C:cell cortex"/>
    <property type="evidence" value="ECO:0007669"/>
    <property type="project" value="UniProtKB-SubCell"/>
</dbReference>
<dbReference type="GO" id="GO:0031253">
    <property type="term" value="C:cell projection membrane"/>
    <property type="evidence" value="ECO:0000314"/>
    <property type="project" value="UniProtKB"/>
</dbReference>
<dbReference type="GO" id="GO:0005911">
    <property type="term" value="C:cell-cell junction"/>
    <property type="evidence" value="ECO:0000314"/>
    <property type="project" value="UniProtKB"/>
</dbReference>
<dbReference type="GO" id="GO:0005737">
    <property type="term" value="C:cytoplasm"/>
    <property type="evidence" value="ECO:0000314"/>
    <property type="project" value="UniProtKB"/>
</dbReference>
<dbReference type="GO" id="GO:0005856">
    <property type="term" value="C:cytoskeleton"/>
    <property type="evidence" value="ECO:0000314"/>
    <property type="project" value="UniProtKB"/>
</dbReference>
<dbReference type="GO" id="GO:0005829">
    <property type="term" value="C:cytosol"/>
    <property type="evidence" value="ECO:0000314"/>
    <property type="project" value="HPA"/>
</dbReference>
<dbReference type="GO" id="GO:0070062">
    <property type="term" value="C:extracellular exosome"/>
    <property type="evidence" value="ECO:0007005"/>
    <property type="project" value="UniProtKB"/>
</dbReference>
<dbReference type="GO" id="GO:0030175">
    <property type="term" value="C:filopodium"/>
    <property type="evidence" value="ECO:0000314"/>
    <property type="project" value="UniProtKB"/>
</dbReference>
<dbReference type="GO" id="GO:0030426">
    <property type="term" value="C:growth cone"/>
    <property type="evidence" value="ECO:0000250"/>
    <property type="project" value="UniProtKB"/>
</dbReference>
<dbReference type="GO" id="GO:0030027">
    <property type="term" value="C:lamellipodium"/>
    <property type="evidence" value="ECO:0000250"/>
    <property type="project" value="UniProtKB"/>
</dbReference>
<dbReference type="GO" id="GO:0044393">
    <property type="term" value="C:microspike"/>
    <property type="evidence" value="ECO:0000314"/>
    <property type="project" value="UniProtKB"/>
</dbReference>
<dbReference type="GO" id="GO:0005902">
    <property type="term" value="C:microvillus"/>
    <property type="evidence" value="ECO:0000314"/>
    <property type="project" value="UniProtKB"/>
</dbReference>
<dbReference type="GO" id="GO:0002102">
    <property type="term" value="C:podosome"/>
    <property type="evidence" value="ECO:0000314"/>
    <property type="project" value="UniProtKB"/>
</dbReference>
<dbReference type="GO" id="GO:0001726">
    <property type="term" value="C:ruffle"/>
    <property type="evidence" value="ECO:0000314"/>
    <property type="project" value="UniProtKB"/>
</dbReference>
<dbReference type="GO" id="GO:0001725">
    <property type="term" value="C:stress fiber"/>
    <property type="evidence" value="ECO:0000314"/>
    <property type="project" value="UniProtKB"/>
</dbReference>
<dbReference type="GO" id="GO:0003779">
    <property type="term" value="F:actin binding"/>
    <property type="evidence" value="ECO:0000314"/>
    <property type="project" value="UniProtKB"/>
</dbReference>
<dbReference type="GO" id="GO:0051015">
    <property type="term" value="F:actin filament binding"/>
    <property type="evidence" value="ECO:0000314"/>
    <property type="project" value="UniProtKB"/>
</dbReference>
<dbReference type="GO" id="GO:0045296">
    <property type="term" value="F:cadherin binding"/>
    <property type="evidence" value="ECO:0007005"/>
    <property type="project" value="BHF-UCL"/>
</dbReference>
<dbReference type="GO" id="GO:0030674">
    <property type="term" value="F:protein-macromolecule adaptor activity"/>
    <property type="evidence" value="ECO:0007669"/>
    <property type="project" value="InterPro"/>
</dbReference>
<dbReference type="GO" id="GO:0003723">
    <property type="term" value="F:RNA binding"/>
    <property type="evidence" value="ECO:0007005"/>
    <property type="project" value="UniProtKB"/>
</dbReference>
<dbReference type="GO" id="GO:0030036">
    <property type="term" value="P:actin cytoskeleton organization"/>
    <property type="evidence" value="ECO:0000314"/>
    <property type="project" value="UniProtKB"/>
</dbReference>
<dbReference type="GO" id="GO:0051017">
    <property type="term" value="P:actin filament bundle assembly"/>
    <property type="evidence" value="ECO:0000314"/>
    <property type="project" value="UniProtKB"/>
</dbReference>
<dbReference type="GO" id="GO:0016477">
    <property type="term" value="P:cell migration"/>
    <property type="evidence" value="ECO:0000315"/>
    <property type="project" value="UniProtKB"/>
</dbReference>
<dbReference type="GO" id="GO:0048870">
    <property type="term" value="P:cell motility"/>
    <property type="evidence" value="ECO:0000314"/>
    <property type="project" value="UniProtKB"/>
</dbReference>
<dbReference type="GO" id="GO:0007043">
    <property type="term" value="P:cell-cell junction assembly"/>
    <property type="evidence" value="ECO:0000314"/>
    <property type="project" value="UniProtKB"/>
</dbReference>
<dbReference type="GO" id="GO:0035089">
    <property type="term" value="P:establishment of apical/basal cell polarity"/>
    <property type="evidence" value="ECO:0000314"/>
    <property type="project" value="UniProtKB"/>
</dbReference>
<dbReference type="GO" id="GO:0007163">
    <property type="term" value="P:establishment or maintenance of cell polarity"/>
    <property type="evidence" value="ECO:0000318"/>
    <property type="project" value="GO_Central"/>
</dbReference>
<dbReference type="GO" id="GO:0030035">
    <property type="term" value="P:microspike assembly"/>
    <property type="evidence" value="ECO:0000314"/>
    <property type="project" value="UniProtKB"/>
</dbReference>
<dbReference type="GO" id="GO:0030046">
    <property type="term" value="P:parallel actin filament bundle assembly"/>
    <property type="evidence" value="ECO:0000314"/>
    <property type="project" value="UniProtKB"/>
</dbReference>
<dbReference type="GO" id="GO:0090091">
    <property type="term" value="P:positive regulation of extracellular matrix disassembly"/>
    <property type="evidence" value="ECO:0000314"/>
    <property type="project" value="UniProtKB"/>
</dbReference>
<dbReference type="GO" id="GO:0051491">
    <property type="term" value="P:positive regulation of filopodium assembly"/>
    <property type="evidence" value="ECO:0000314"/>
    <property type="project" value="UniProtKB"/>
</dbReference>
<dbReference type="GO" id="GO:0010592">
    <property type="term" value="P:positive regulation of lamellipodium assembly"/>
    <property type="evidence" value="ECO:0000314"/>
    <property type="project" value="UniProtKB"/>
</dbReference>
<dbReference type="GO" id="GO:0071803">
    <property type="term" value="P:positive regulation of podosome assembly"/>
    <property type="evidence" value="ECO:0000314"/>
    <property type="project" value="UniProtKB"/>
</dbReference>
<dbReference type="GO" id="GO:0032956">
    <property type="term" value="P:regulation of actin cytoskeleton organization"/>
    <property type="evidence" value="ECO:0000314"/>
    <property type="project" value="UniProtKB"/>
</dbReference>
<dbReference type="GO" id="GO:0032534">
    <property type="term" value="P:regulation of microvillus assembly"/>
    <property type="evidence" value="ECO:0000314"/>
    <property type="project" value="UniProtKB"/>
</dbReference>
<dbReference type="CDD" id="cd23344">
    <property type="entry name" value="beta-trefoil_FSCN1_rpt1"/>
    <property type="match status" value="1"/>
</dbReference>
<dbReference type="CDD" id="cd23348">
    <property type="entry name" value="beta-trefoil_FSCN1_rpt2"/>
    <property type="match status" value="1"/>
</dbReference>
<dbReference type="CDD" id="cd23352">
    <property type="entry name" value="beta-trefoil_FSCN1_rpt3"/>
    <property type="match status" value="1"/>
</dbReference>
<dbReference type="CDD" id="cd23356">
    <property type="entry name" value="beta-trefoil_FSCN1_rpt4"/>
    <property type="match status" value="1"/>
</dbReference>
<dbReference type="FunFam" id="2.80.10.50:FF:000008">
    <property type="entry name" value="Fascin"/>
    <property type="match status" value="1"/>
</dbReference>
<dbReference type="FunFam" id="2.80.10.50:FF:000010">
    <property type="entry name" value="Fascin"/>
    <property type="match status" value="1"/>
</dbReference>
<dbReference type="FunFam" id="2.80.10.50:FF:000015">
    <property type="entry name" value="Fascin"/>
    <property type="match status" value="1"/>
</dbReference>
<dbReference type="FunFam" id="2.80.10.50:FF:000030">
    <property type="entry name" value="Fascin"/>
    <property type="match status" value="1"/>
</dbReference>
<dbReference type="Gene3D" id="2.80.10.50">
    <property type="match status" value="4"/>
</dbReference>
<dbReference type="InterPro" id="IPR008999">
    <property type="entry name" value="Actin-crosslinking"/>
</dbReference>
<dbReference type="InterPro" id="IPR010431">
    <property type="entry name" value="Fascin"/>
</dbReference>
<dbReference type="InterPro" id="IPR022768">
    <property type="entry name" value="Fascin-like_dom"/>
</dbReference>
<dbReference type="InterPro" id="IPR024703">
    <property type="entry name" value="Fascin_metazoans"/>
</dbReference>
<dbReference type="PANTHER" id="PTHR10551">
    <property type="entry name" value="FASCIN"/>
    <property type="match status" value="1"/>
</dbReference>
<dbReference type="PANTHER" id="PTHR10551:SF23">
    <property type="entry name" value="FASCIN"/>
    <property type="match status" value="1"/>
</dbReference>
<dbReference type="Pfam" id="PF06268">
    <property type="entry name" value="Fascin"/>
    <property type="match status" value="4"/>
</dbReference>
<dbReference type="PIRSF" id="PIRSF005682">
    <property type="entry name" value="Fascin"/>
    <property type="match status" value="1"/>
</dbReference>
<dbReference type="SUPFAM" id="SSF50405">
    <property type="entry name" value="Actin-crosslinking proteins"/>
    <property type="match status" value="4"/>
</dbReference>
<proteinExistence type="evidence at protein level"/>
<gene>
    <name type="primary">FSCN1</name>
    <name type="synonym">FAN1</name>
    <name type="synonym">HSN</name>
    <name type="synonym">SNL</name>
</gene>
<organism>
    <name type="scientific">Homo sapiens</name>
    <name type="common">Human</name>
    <dbReference type="NCBI Taxonomy" id="9606"/>
    <lineage>
        <taxon>Eukaryota</taxon>
        <taxon>Metazoa</taxon>
        <taxon>Chordata</taxon>
        <taxon>Craniata</taxon>
        <taxon>Vertebrata</taxon>
        <taxon>Euteleostomi</taxon>
        <taxon>Mammalia</taxon>
        <taxon>Eutheria</taxon>
        <taxon>Euarchontoglires</taxon>
        <taxon>Primates</taxon>
        <taxon>Haplorrhini</taxon>
        <taxon>Catarrhini</taxon>
        <taxon>Hominidae</taxon>
        <taxon>Homo</taxon>
    </lineage>
</organism>
<evidence type="ECO:0000250" key="1">
    <source>
        <dbReference type="UniProtKB" id="P85845"/>
    </source>
</evidence>
<evidence type="ECO:0000250" key="2">
    <source>
        <dbReference type="UniProtKB" id="Q61553"/>
    </source>
</evidence>
<evidence type="ECO:0000269" key="3">
    <source>
    </source>
</evidence>
<evidence type="ECO:0000269" key="4">
    <source>
    </source>
</evidence>
<evidence type="ECO:0000269" key="5">
    <source>
    </source>
</evidence>
<evidence type="ECO:0000269" key="6">
    <source>
    </source>
</evidence>
<evidence type="ECO:0000269" key="7">
    <source>
    </source>
</evidence>
<evidence type="ECO:0000269" key="8">
    <source>
    </source>
</evidence>
<evidence type="ECO:0000269" key="9">
    <source>
    </source>
</evidence>
<evidence type="ECO:0000269" key="10">
    <source>
    </source>
</evidence>
<evidence type="ECO:0000269" key="11">
    <source>
    </source>
</evidence>
<evidence type="ECO:0000269" key="12">
    <source>
    </source>
</evidence>
<evidence type="ECO:0000269" key="13">
    <source>
    </source>
</evidence>
<evidence type="ECO:0000269" key="14">
    <source>
    </source>
</evidence>
<evidence type="ECO:0000269" key="15">
    <source ref="9"/>
</evidence>
<evidence type="ECO:0000305" key="16"/>
<evidence type="ECO:0000305" key="17">
    <source>
    </source>
</evidence>
<evidence type="ECO:0007744" key="18">
    <source>
        <dbReference type="PDB" id="3LLP"/>
    </source>
</evidence>
<evidence type="ECO:0007744" key="19">
    <source>
        <dbReference type="PDB" id="3P53"/>
    </source>
</evidence>
<evidence type="ECO:0007744" key="20">
    <source>
        <dbReference type="PDB" id="4GOV"/>
    </source>
</evidence>
<evidence type="ECO:0007744" key="21">
    <source>
        <dbReference type="PDB" id="4GOY"/>
    </source>
</evidence>
<evidence type="ECO:0007744" key="22">
    <source>
        <dbReference type="PDB" id="4GP0"/>
    </source>
</evidence>
<evidence type="ECO:0007744" key="23">
    <source>
        <dbReference type="PDB" id="4GP3"/>
    </source>
</evidence>
<evidence type="ECO:0007744" key="24">
    <source>
    </source>
</evidence>
<evidence type="ECO:0007744" key="25">
    <source>
    </source>
</evidence>
<evidence type="ECO:0007744" key="26">
    <source>
    </source>
</evidence>
<evidence type="ECO:0007744" key="27">
    <source>
    </source>
</evidence>
<evidence type="ECO:0007829" key="28">
    <source>
        <dbReference type="PDB" id="1DFC"/>
    </source>
</evidence>
<evidence type="ECO:0007829" key="29">
    <source>
        <dbReference type="PDB" id="3LLP"/>
    </source>
</evidence>
<evidence type="ECO:0007829" key="30">
    <source>
        <dbReference type="PDB" id="3P53"/>
    </source>
</evidence>
<evidence type="ECO:0007829" key="31">
    <source>
        <dbReference type="PDB" id="4GOV"/>
    </source>
</evidence>
<evidence type="ECO:0007829" key="32">
    <source>
        <dbReference type="PDB" id="6B0T"/>
    </source>
</evidence>
<evidence type="ECO:0007829" key="33">
    <source>
        <dbReference type="PDB" id="6I10"/>
    </source>
</evidence>
<evidence type="ECO:0007829" key="34">
    <source>
        <dbReference type="PDB" id="6I13"/>
    </source>
</evidence>
<evidence type="ECO:0007829" key="35">
    <source>
        <dbReference type="PDB" id="6I18"/>
    </source>
</evidence>
<keyword id="KW-0002">3D-structure</keyword>
<keyword id="KW-0007">Acetylation</keyword>
<keyword id="KW-0009">Actin-binding</keyword>
<keyword id="KW-0965">Cell junction</keyword>
<keyword id="KW-0966">Cell projection</keyword>
<keyword id="KW-0963">Cytoplasm</keyword>
<keyword id="KW-0206">Cytoskeleton</keyword>
<keyword id="KW-0903">Direct protein sequencing</keyword>
<keyword id="KW-1017">Isopeptide bond</keyword>
<keyword id="KW-0597">Phosphoprotein</keyword>
<keyword id="KW-1267">Proteomics identification</keyword>
<keyword id="KW-1185">Reference proteome</keyword>
<keyword id="KW-0832">Ubl conjugation</keyword>
<feature type="initiator methionine" description="Removed" evidence="15 25">
    <location>
        <position position="1"/>
    </location>
</feature>
<feature type="chain" id="PRO_0000219379" description="Fascin">
    <location>
        <begin position="2"/>
        <end position="493"/>
    </location>
</feature>
<feature type="modified residue" description="N-acetylthreonine" evidence="15 25">
    <location>
        <position position="2"/>
    </location>
</feature>
<feature type="modified residue" description="Phosphoserine" evidence="24">
    <location>
        <position position="38"/>
    </location>
</feature>
<feature type="modified residue" description="Phosphoserine; by PKC" evidence="12 17">
    <location>
        <position position="39"/>
    </location>
</feature>
<feature type="modified residue" description="N6-acetyllysine" evidence="2">
    <location>
        <position position="74"/>
    </location>
</feature>
<feature type="modified residue" description="Phosphoserine" evidence="26">
    <location>
        <position position="127"/>
    </location>
</feature>
<feature type="modified residue" description="Phosphoserine" evidence="26">
    <location>
        <position position="234"/>
    </location>
</feature>
<feature type="modified residue" description="Phosphothreonine" evidence="26">
    <location>
        <position position="239"/>
    </location>
</feature>
<feature type="modified residue" description="Phosphothreonine" evidence="1">
    <location>
        <position position="403"/>
    </location>
</feature>
<feature type="cross-link" description="Glycyl lysine isopeptide (Lys-Gly) (interchain with G-Cter in SUMO2)" evidence="27">
    <location>
        <position position="399"/>
    </location>
</feature>
<feature type="mutagenesis site" description="Decreased actin-binding and loss of actin-bundling activity; when associated with E-43 and E-398. Decreased actin-binding and loss of actin-bundling activity; when associated with E-43; E-100 and E-109." evidence="6">
    <original>K</original>
    <variation>E</variation>
    <location>
        <position position="22"/>
    </location>
</feature>
<feature type="mutagenesis site" description="Strongly decreases actin-bundling activity." evidence="9">
    <original>F</original>
    <variation>A</variation>
    <location>
        <position position="29"/>
    </location>
</feature>
<feature type="mutagenesis site" description="Abolishes axon growth cone collapse in response to NGF." evidence="8">
    <original>SASS</original>
    <variation>AAAA</variation>
    <location>
        <begin position="36"/>
        <end position="39"/>
    </location>
</feature>
<feature type="mutagenesis site" description="Loss of phosphorylation." evidence="12">
    <original>S</original>
    <variation>A</variation>
    <location>
        <position position="39"/>
    </location>
</feature>
<feature type="mutagenesis site" description="Phosphomimetic mutant that strongly decreases actin-bundling activity." evidence="9">
    <original>S</original>
    <variation>D</variation>
    <location>
        <position position="39"/>
    </location>
</feature>
<feature type="mutagenesis site" description="Decreased actin-binding and loss of actin-bundling activity; when associated with E-22 and E-398. Decreased actin-binding and loss of actin-bundling activity; when associated with E-22; E-100 and E-109." evidence="6">
    <original>K</original>
    <variation>E</variation>
    <location>
        <position position="43"/>
    </location>
</feature>
<feature type="mutagenesis site" description="Strongly decreases actin-bundling activity." evidence="9">
    <original>E</original>
    <variation>A</variation>
    <location>
        <position position="49"/>
    </location>
</feature>
<feature type="mutagenesis site" description="Mildly decreased actin-binding and actin-bundling activity; when associated with E-109 and E-247. Decreased actin-binding and loss of actin-bundling activity; when associated with E-22; E-43 and E-109." evidence="6">
    <original>R</original>
    <variation>E</variation>
    <location>
        <position position="100"/>
    </location>
</feature>
<feature type="mutagenesis site" description="Mildly decreased actin-binding and actin-bundling activity; when associated with E-100 and E-247. Decreased actin-binding and loss of actin-bundling activity; when associated with E-22; E-43 and E-100." evidence="6">
    <original>R</original>
    <variation>E</variation>
    <location>
        <position position="109"/>
    </location>
</feature>
<feature type="mutagenesis site" description="Strongly decreases actin-bundling activity." evidence="9">
    <original>RKR</original>
    <variation>AAA</variation>
    <location>
        <begin position="149"/>
        <end position="151"/>
    </location>
</feature>
<feature type="mutagenesis site" description="No significant effect on actin-binding and actin-bundling activity; when associated with E-313." evidence="6">
    <original>KR</original>
    <variation>EE</variation>
    <location>
        <begin position="150"/>
        <end position="151"/>
    </location>
</feature>
<feature type="mutagenesis site" description="Decreases actin-bundling activity." evidence="9">
    <original>KVGK</original>
    <variation>AVGA</variation>
    <location>
        <begin position="247"/>
        <end position="250"/>
    </location>
</feature>
<feature type="mutagenesis site" description="Mildly decreased actin-binding and actin-bundling activity; when associated with E-100 and E-109." evidence="6">
    <original>K</original>
    <variation>E</variation>
    <location>
        <position position="247"/>
    </location>
</feature>
<feature type="mutagenesis site" description="Decreased actin-binding and actin-bundling activity; when associated with E-353 and E-358." evidence="6">
    <original>R</original>
    <variation>E</variation>
    <location>
        <position position="271"/>
    </location>
</feature>
<feature type="mutagenesis site" description="No significant effect on actin-binding and actin-bundling activity; when associated with 150-E-E-151." evidence="6">
    <original>K</original>
    <variation>E</variation>
    <location>
        <position position="313"/>
    </location>
</feature>
<feature type="mutagenesis site" description="No significant effect on actin-binding and actin-bundling activity; when associated with E-348 and Q-464." evidence="6">
    <original>R</original>
    <variation>E</variation>
    <location>
        <position position="341"/>
    </location>
</feature>
<feature type="mutagenesis site" description="No significant effect on actin-binding and actin-bundling activity; when associated with E-341 and Q-464." evidence="6">
    <original>R</original>
    <variation>E</variation>
    <location>
        <position position="348"/>
    </location>
</feature>
<feature type="mutagenesis site" description="Decreased actin-binding and actin-bundling activity; when associated with E-271 and E-358." evidence="6">
    <original>K</original>
    <variation>E</variation>
    <location>
        <position position="353"/>
    </location>
</feature>
<feature type="mutagenesis site" description="Strongly decreases actin-bundling activity." evidence="9">
    <original>K</original>
    <variation>A</variation>
    <location>
        <position position="358"/>
    </location>
</feature>
<feature type="mutagenesis site" description="Decreased actin-binding and actin-bundling activity; when associated with E-271 and E-353." evidence="6">
    <original>K</original>
    <variation>E</variation>
    <location>
        <position position="358"/>
    </location>
</feature>
<feature type="mutagenesis site" description="Decreased actin-bundling activity." evidence="4">
    <original>H</original>
    <variation>A</variation>
    <location>
        <position position="392"/>
    </location>
</feature>
<feature type="mutagenesis site" description="Decreased actin-binding and loss of actin-bundling activity; when associated with E-22 and E-43." evidence="6">
    <original>R</original>
    <variation>E</variation>
    <location>
        <position position="398"/>
    </location>
</feature>
<feature type="mutagenesis site" description="No significant effect on actin-binding and actin-bundling activity; when associated with E-341 and E-348." evidence="6">
    <original>K</original>
    <variation>Q</variation>
    <location>
        <position position="464"/>
    </location>
</feature>
<feature type="mutagenesis site" description="Decreased actin-bundling activity." evidence="4">
    <original>K</original>
    <variation>A</variation>
    <location>
        <position position="471"/>
    </location>
</feature>
<feature type="mutagenesis site" description="Decreased actin-bundling activity." evidence="4">
    <original>A</original>
    <variation>W</variation>
    <location>
        <position position="488"/>
    </location>
</feature>
<feature type="sequence conflict" description="In Ref. 8; AAH06304." evidence="16" ref="8">
    <original>A</original>
    <variation>V</variation>
    <location>
        <position position="440"/>
    </location>
</feature>
<feature type="strand" evidence="35">
    <location>
        <begin position="14"/>
        <end position="17"/>
    </location>
</feature>
<feature type="strand" evidence="35">
    <location>
        <begin position="23"/>
        <end position="26"/>
    </location>
</feature>
<feature type="strand" evidence="35">
    <location>
        <begin position="28"/>
        <end position="31"/>
    </location>
</feature>
<feature type="strand" evidence="35">
    <location>
        <begin position="33"/>
        <end position="39"/>
    </location>
</feature>
<feature type="helix" evidence="35">
    <location>
        <begin position="42"/>
        <end position="44"/>
    </location>
</feature>
<feature type="strand" evidence="35">
    <location>
        <begin position="46"/>
        <end position="49"/>
    </location>
</feature>
<feature type="helix" evidence="30">
    <location>
        <begin position="53"/>
        <end position="55"/>
    </location>
</feature>
<feature type="strand" evidence="35">
    <location>
        <begin position="60"/>
        <end position="64"/>
    </location>
</feature>
<feature type="strand" evidence="32">
    <location>
        <begin position="65"/>
        <end position="67"/>
    </location>
</feature>
<feature type="strand" evidence="35">
    <location>
        <begin position="69"/>
        <end position="72"/>
    </location>
</feature>
<feature type="strand" evidence="35">
    <location>
        <begin position="78"/>
        <end position="84"/>
    </location>
</feature>
<feature type="helix" evidence="35">
    <location>
        <begin position="87"/>
        <end position="89"/>
    </location>
</feature>
<feature type="strand" evidence="35">
    <location>
        <begin position="91"/>
        <end position="95"/>
    </location>
</feature>
<feature type="strand" evidence="28">
    <location>
        <begin position="97"/>
        <end position="99"/>
    </location>
</feature>
<feature type="strand" evidence="35">
    <location>
        <begin position="101"/>
        <end position="105"/>
    </location>
</feature>
<feature type="turn" evidence="35">
    <location>
        <begin position="106"/>
        <end position="108"/>
    </location>
</feature>
<feature type="strand" evidence="35">
    <location>
        <begin position="111"/>
        <end position="113"/>
    </location>
</feature>
<feature type="strand" evidence="35">
    <location>
        <begin position="120"/>
        <end position="125"/>
    </location>
</feature>
<feature type="helix" evidence="35">
    <location>
        <begin position="128"/>
        <end position="130"/>
    </location>
</feature>
<feature type="strand" evidence="35">
    <location>
        <begin position="132"/>
        <end position="138"/>
    </location>
</feature>
<feature type="strand" evidence="35">
    <location>
        <begin position="140"/>
        <end position="146"/>
    </location>
</feature>
<feature type="turn" evidence="35">
    <location>
        <begin position="147"/>
        <end position="150"/>
    </location>
</feature>
<feature type="strand" evidence="35">
    <location>
        <begin position="151"/>
        <end position="155"/>
    </location>
</feature>
<feature type="strand" evidence="34">
    <location>
        <begin position="158"/>
        <end position="160"/>
    </location>
</feature>
<feature type="strand" evidence="35">
    <location>
        <begin position="162"/>
        <end position="169"/>
    </location>
</feature>
<feature type="helix" evidence="35">
    <location>
        <begin position="173"/>
        <end position="175"/>
    </location>
</feature>
<feature type="strand" evidence="29">
    <location>
        <begin position="177"/>
        <end position="181"/>
    </location>
</feature>
<feature type="strand" evidence="29">
    <location>
        <begin position="183"/>
        <end position="189"/>
    </location>
</feature>
<feature type="strand" evidence="35">
    <location>
        <begin position="202"/>
        <end position="205"/>
    </location>
</feature>
<feature type="helix" evidence="35">
    <location>
        <begin position="208"/>
        <end position="210"/>
    </location>
</feature>
<feature type="strand" evidence="35">
    <location>
        <begin position="212"/>
        <end position="217"/>
    </location>
</feature>
<feature type="strand" evidence="35">
    <location>
        <begin position="220"/>
        <end position="224"/>
    </location>
</feature>
<feature type="strand" evidence="35">
    <location>
        <begin position="230"/>
        <end position="234"/>
    </location>
</feature>
<feature type="turn" evidence="35">
    <location>
        <begin position="235"/>
        <end position="238"/>
    </location>
</feature>
<feature type="strand" evidence="35">
    <location>
        <begin position="239"/>
        <end position="242"/>
    </location>
</feature>
<feature type="helix" evidence="35">
    <location>
        <begin position="250"/>
        <end position="252"/>
    </location>
</feature>
<feature type="strand" evidence="35">
    <location>
        <begin position="254"/>
        <end position="258"/>
    </location>
</feature>
<feature type="strand" evidence="35">
    <location>
        <begin position="261"/>
        <end position="266"/>
    </location>
</feature>
<feature type="turn" evidence="33">
    <location>
        <begin position="268"/>
        <end position="270"/>
    </location>
</feature>
<feature type="strand" evidence="35">
    <location>
        <begin position="272"/>
        <end position="275"/>
    </location>
</feature>
<feature type="strand" evidence="35">
    <location>
        <begin position="278"/>
        <end position="280"/>
    </location>
</feature>
<feature type="strand" evidence="35">
    <location>
        <begin position="282"/>
        <end position="286"/>
    </location>
</feature>
<feature type="helix" evidence="35">
    <location>
        <begin position="290"/>
        <end position="292"/>
    </location>
</feature>
<feature type="strand" evidence="35">
    <location>
        <begin position="294"/>
        <end position="298"/>
    </location>
</feature>
<feature type="turn" evidence="35">
    <location>
        <begin position="300"/>
        <end position="302"/>
    </location>
</feature>
<feature type="strand" evidence="35">
    <location>
        <begin position="305"/>
        <end position="308"/>
    </location>
</feature>
<feature type="turn" evidence="28">
    <location>
        <begin position="310"/>
        <end position="312"/>
    </location>
</feature>
<feature type="strand" evidence="35">
    <location>
        <begin position="314"/>
        <end position="317"/>
    </location>
</feature>
<feature type="strand" evidence="35">
    <location>
        <begin position="321"/>
        <end position="329"/>
    </location>
</feature>
<feature type="helix" evidence="35">
    <location>
        <begin position="332"/>
        <end position="334"/>
    </location>
</feature>
<feature type="strand" evidence="35">
    <location>
        <begin position="336"/>
        <end position="341"/>
    </location>
</feature>
<feature type="strand" evidence="35">
    <location>
        <begin position="344"/>
        <end position="348"/>
    </location>
</feature>
<feature type="strand" evidence="35">
    <location>
        <begin position="354"/>
        <end position="357"/>
    </location>
</feature>
<feature type="strand" evidence="35">
    <location>
        <begin position="361"/>
        <end position="369"/>
    </location>
</feature>
<feature type="helix" evidence="35">
    <location>
        <begin position="372"/>
        <end position="374"/>
    </location>
</feature>
<feature type="strand" evidence="35">
    <location>
        <begin position="376"/>
        <end position="380"/>
    </location>
</feature>
<feature type="strand" evidence="35">
    <location>
        <begin position="384"/>
        <end position="386"/>
    </location>
</feature>
<feature type="strand" evidence="35">
    <location>
        <begin position="393"/>
        <end position="397"/>
    </location>
</feature>
<feature type="turn" evidence="35">
    <location>
        <begin position="399"/>
        <end position="401"/>
    </location>
</feature>
<feature type="strand" evidence="35">
    <location>
        <begin position="403"/>
        <end position="410"/>
    </location>
</feature>
<feature type="strand" evidence="35">
    <location>
        <begin position="414"/>
        <end position="419"/>
    </location>
</feature>
<feature type="strand" evidence="35">
    <location>
        <begin position="422"/>
        <end position="426"/>
    </location>
</feature>
<feature type="strand" evidence="35">
    <location>
        <begin position="432"/>
        <end position="435"/>
    </location>
</feature>
<feature type="strand" evidence="35">
    <location>
        <begin position="439"/>
        <end position="447"/>
    </location>
</feature>
<feature type="strand" evidence="35">
    <location>
        <begin position="451"/>
        <end position="457"/>
    </location>
</feature>
<feature type="strand" evidence="35">
    <location>
        <begin position="460"/>
        <end position="465"/>
    </location>
</feature>
<feature type="strand" evidence="35">
    <location>
        <begin position="468"/>
        <end position="472"/>
    </location>
</feature>
<feature type="strand" evidence="35">
    <location>
        <begin position="476"/>
        <end position="484"/>
    </location>
</feature>
<feature type="helix" evidence="35">
    <location>
        <begin position="487"/>
        <end position="489"/>
    </location>
</feature>
<feature type="strand" evidence="31">
    <location>
        <begin position="490"/>
        <end position="492"/>
    </location>
</feature>
<protein>
    <recommendedName>
        <fullName>Fascin</fullName>
    </recommendedName>
    <alternativeName>
        <fullName>55 kDa actin-bundling protein</fullName>
    </alternativeName>
    <alternativeName>
        <fullName>Singed-like protein</fullName>
    </alternativeName>
    <alternativeName>
        <fullName>p55</fullName>
    </alternativeName>
</protein>
<reference key="1">
    <citation type="journal article" date="1994" name="DNA Cell Biol.">
        <title>cDNA cloning and expression of the human homolog of the sea urchin fascin and Drosophila singed genes which encodes an actin-bundling protein.</title>
        <authorList>
            <person name="Duh F.-M."/>
            <person name="Latif F."/>
            <person name="Weng Y."/>
            <person name="Geil L."/>
            <person name="Modi W."/>
            <person name="Stackhouse T."/>
            <person name="Matsumura F."/>
            <person name="Duan D.R."/>
            <person name="Linehan W.M."/>
            <person name="Lerman M.I."/>
            <person name="Gnarra J.R."/>
        </authorList>
    </citation>
    <scope>NUCLEOTIDE SEQUENCE [MRNA]</scope>
    <source>
        <tissue>Teratocarcinoma</tissue>
    </source>
</reference>
<reference key="2">
    <citation type="journal article" date="1994" name="J. Virol.">
        <title>Epstein-Barr virus infection induces expression in B lymphocytes of a novel gene encoding an evolutionarily conserved 55-kilodalton actin-bundling protein.</title>
        <authorList>
            <person name="Mosialos G."/>
            <person name="Yamashiro S."/>
            <person name="Baughman R.W."/>
            <person name="Matsudaira P."/>
            <person name="Vara L."/>
            <person name="Matsumura F."/>
            <person name="Kieff E."/>
            <person name="Birkenbach M."/>
        </authorList>
    </citation>
    <scope>NUCLEOTIDE SEQUENCE [MRNA]</scope>
</reference>
<reference key="3">
    <citation type="submission" date="2001-07" db="EMBL/GenBank/DDBJ databases">
        <title>Human fascin gene sequence.</title>
        <authorList>
            <person name="Bros M."/>
            <person name="Ross X.L."/>
            <person name="Reske-Kunz A.B."/>
            <person name="Ross R."/>
        </authorList>
    </citation>
    <scope>NUCLEOTIDE SEQUENCE [GENOMIC DNA]</scope>
</reference>
<reference key="4">
    <citation type="journal article" date="2004" name="Nat. Genet.">
        <title>Complete sequencing and characterization of 21,243 full-length human cDNAs.</title>
        <authorList>
            <person name="Ota T."/>
            <person name="Suzuki Y."/>
            <person name="Nishikawa T."/>
            <person name="Otsuki T."/>
            <person name="Sugiyama T."/>
            <person name="Irie R."/>
            <person name="Wakamatsu A."/>
            <person name="Hayashi K."/>
            <person name="Sato H."/>
            <person name="Nagai K."/>
            <person name="Kimura K."/>
            <person name="Makita H."/>
            <person name="Sekine M."/>
            <person name="Obayashi M."/>
            <person name="Nishi T."/>
            <person name="Shibahara T."/>
            <person name="Tanaka T."/>
            <person name="Ishii S."/>
            <person name="Yamamoto J."/>
            <person name="Saito K."/>
            <person name="Kawai Y."/>
            <person name="Isono Y."/>
            <person name="Nakamura Y."/>
            <person name="Nagahari K."/>
            <person name="Murakami K."/>
            <person name="Yasuda T."/>
            <person name="Iwayanagi T."/>
            <person name="Wagatsuma M."/>
            <person name="Shiratori A."/>
            <person name="Sudo H."/>
            <person name="Hosoiri T."/>
            <person name="Kaku Y."/>
            <person name="Kodaira H."/>
            <person name="Kondo H."/>
            <person name="Sugawara M."/>
            <person name="Takahashi M."/>
            <person name="Kanda K."/>
            <person name="Yokoi T."/>
            <person name="Furuya T."/>
            <person name="Kikkawa E."/>
            <person name="Omura Y."/>
            <person name="Abe K."/>
            <person name="Kamihara K."/>
            <person name="Katsuta N."/>
            <person name="Sato K."/>
            <person name="Tanikawa M."/>
            <person name="Yamazaki M."/>
            <person name="Ninomiya K."/>
            <person name="Ishibashi T."/>
            <person name="Yamashita H."/>
            <person name="Murakawa K."/>
            <person name="Fujimori K."/>
            <person name="Tanai H."/>
            <person name="Kimata M."/>
            <person name="Watanabe M."/>
            <person name="Hiraoka S."/>
            <person name="Chiba Y."/>
            <person name="Ishida S."/>
            <person name="Ono Y."/>
            <person name="Takiguchi S."/>
            <person name="Watanabe S."/>
            <person name="Yosida M."/>
            <person name="Hotuta T."/>
            <person name="Kusano J."/>
            <person name="Kanehori K."/>
            <person name="Takahashi-Fujii A."/>
            <person name="Hara H."/>
            <person name="Tanase T.-O."/>
            <person name="Nomura Y."/>
            <person name="Togiya S."/>
            <person name="Komai F."/>
            <person name="Hara R."/>
            <person name="Takeuchi K."/>
            <person name="Arita M."/>
            <person name="Imose N."/>
            <person name="Musashino K."/>
            <person name="Yuuki H."/>
            <person name="Oshima A."/>
            <person name="Sasaki N."/>
            <person name="Aotsuka S."/>
            <person name="Yoshikawa Y."/>
            <person name="Matsunawa H."/>
            <person name="Ichihara T."/>
            <person name="Shiohata N."/>
            <person name="Sano S."/>
            <person name="Moriya S."/>
            <person name="Momiyama H."/>
            <person name="Satoh N."/>
            <person name="Takami S."/>
            <person name="Terashima Y."/>
            <person name="Suzuki O."/>
            <person name="Nakagawa S."/>
            <person name="Senoh A."/>
            <person name="Mizoguchi H."/>
            <person name="Goto Y."/>
            <person name="Shimizu F."/>
            <person name="Wakebe H."/>
            <person name="Hishigaki H."/>
            <person name="Watanabe T."/>
            <person name="Sugiyama A."/>
            <person name="Takemoto M."/>
            <person name="Kawakami B."/>
            <person name="Yamazaki M."/>
            <person name="Watanabe K."/>
            <person name="Kumagai A."/>
            <person name="Itakura S."/>
            <person name="Fukuzumi Y."/>
            <person name="Fujimori Y."/>
            <person name="Komiyama M."/>
            <person name="Tashiro H."/>
            <person name="Tanigami A."/>
            <person name="Fujiwara T."/>
            <person name="Ono T."/>
            <person name="Yamada K."/>
            <person name="Fujii Y."/>
            <person name="Ozaki K."/>
            <person name="Hirao M."/>
            <person name="Ohmori Y."/>
            <person name="Kawabata A."/>
            <person name="Hikiji T."/>
            <person name="Kobatake N."/>
            <person name="Inagaki H."/>
            <person name="Ikema Y."/>
            <person name="Okamoto S."/>
            <person name="Okitani R."/>
            <person name="Kawakami T."/>
            <person name="Noguchi S."/>
            <person name="Itoh T."/>
            <person name="Shigeta K."/>
            <person name="Senba T."/>
            <person name="Matsumura K."/>
            <person name="Nakajima Y."/>
            <person name="Mizuno T."/>
            <person name="Morinaga M."/>
            <person name="Sasaki M."/>
            <person name="Togashi T."/>
            <person name="Oyama M."/>
            <person name="Hata H."/>
            <person name="Watanabe M."/>
            <person name="Komatsu T."/>
            <person name="Mizushima-Sugano J."/>
            <person name="Satoh T."/>
            <person name="Shirai Y."/>
            <person name="Takahashi Y."/>
            <person name="Nakagawa K."/>
            <person name="Okumura K."/>
            <person name="Nagase T."/>
            <person name="Nomura N."/>
            <person name="Kikuchi H."/>
            <person name="Masuho Y."/>
            <person name="Yamashita R."/>
            <person name="Nakai K."/>
            <person name="Yada T."/>
            <person name="Nakamura Y."/>
            <person name="Ohara O."/>
            <person name="Isogai T."/>
            <person name="Sugano S."/>
        </authorList>
    </citation>
    <scope>NUCLEOTIDE SEQUENCE [LARGE SCALE MRNA]</scope>
    <source>
        <tissue>Testis</tissue>
    </source>
</reference>
<reference key="5">
    <citation type="submission" date="2003-05" db="EMBL/GenBank/DDBJ databases">
        <title>Cloning of human full-length CDSs in BD Creator(TM) system donor vector.</title>
        <authorList>
            <person name="Kalnine N."/>
            <person name="Chen X."/>
            <person name="Rolfs A."/>
            <person name="Halleck A."/>
            <person name="Hines L."/>
            <person name="Eisenstein S."/>
            <person name="Koundinya M."/>
            <person name="Raphael J."/>
            <person name="Moreira D."/>
            <person name="Kelley T."/>
            <person name="LaBaer J."/>
            <person name="Lin Y."/>
            <person name="Phelan M."/>
            <person name="Farmer A."/>
        </authorList>
    </citation>
    <scope>NUCLEOTIDE SEQUENCE [LARGE SCALE MRNA]</scope>
</reference>
<reference key="6">
    <citation type="journal article" date="2003" name="Nature">
        <title>The DNA sequence of human chromosome 7.</title>
        <authorList>
            <person name="Hillier L.W."/>
            <person name="Fulton R.S."/>
            <person name="Fulton L.A."/>
            <person name="Graves T.A."/>
            <person name="Pepin K.H."/>
            <person name="Wagner-McPherson C."/>
            <person name="Layman D."/>
            <person name="Maas J."/>
            <person name="Jaeger S."/>
            <person name="Walker R."/>
            <person name="Wylie K."/>
            <person name="Sekhon M."/>
            <person name="Becker M.C."/>
            <person name="O'Laughlin M.D."/>
            <person name="Schaller M.E."/>
            <person name="Fewell G.A."/>
            <person name="Delehaunty K.D."/>
            <person name="Miner T.L."/>
            <person name="Nash W.E."/>
            <person name="Cordes M."/>
            <person name="Du H."/>
            <person name="Sun H."/>
            <person name="Edwards J."/>
            <person name="Bradshaw-Cordum H."/>
            <person name="Ali J."/>
            <person name="Andrews S."/>
            <person name="Isak A."/>
            <person name="Vanbrunt A."/>
            <person name="Nguyen C."/>
            <person name="Du F."/>
            <person name="Lamar B."/>
            <person name="Courtney L."/>
            <person name="Kalicki J."/>
            <person name="Ozersky P."/>
            <person name="Bielicki L."/>
            <person name="Scott K."/>
            <person name="Holmes A."/>
            <person name="Harkins R."/>
            <person name="Harris A."/>
            <person name="Strong C.M."/>
            <person name="Hou S."/>
            <person name="Tomlinson C."/>
            <person name="Dauphin-Kohlberg S."/>
            <person name="Kozlowicz-Reilly A."/>
            <person name="Leonard S."/>
            <person name="Rohlfing T."/>
            <person name="Rock S.M."/>
            <person name="Tin-Wollam A.-M."/>
            <person name="Abbott A."/>
            <person name="Minx P."/>
            <person name="Maupin R."/>
            <person name="Strowmatt C."/>
            <person name="Latreille P."/>
            <person name="Miller N."/>
            <person name="Johnson D."/>
            <person name="Murray J."/>
            <person name="Woessner J.P."/>
            <person name="Wendl M.C."/>
            <person name="Yang S.-P."/>
            <person name="Schultz B.R."/>
            <person name="Wallis J.W."/>
            <person name="Spieth J."/>
            <person name="Bieri T.A."/>
            <person name="Nelson J.O."/>
            <person name="Berkowicz N."/>
            <person name="Wohldmann P.E."/>
            <person name="Cook L.L."/>
            <person name="Hickenbotham M.T."/>
            <person name="Eldred J."/>
            <person name="Williams D."/>
            <person name="Bedell J.A."/>
            <person name="Mardis E.R."/>
            <person name="Clifton S.W."/>
            <person name="Chissoe S.L."/>
            <person name="Marra M.A."/>
            <person name="Raymond C."/>
            <person name="Haugen E."/>
            <person name="Gillett W."/>
            <person name="Zhou Y."/>
            <person name="James R."/>
            <person name="Phelps K."/>
            <person name="Iadanoto S."/>
            <person name="Bubb K."/>
            <person name="Simms E."/>
            <person name="Levy R."/>
            <person name="Clendenning J."/>
            <person name="Kaul R."/>
            <person name="Kent W.J."/>
            <person name="Furey T.S."/>
            <person name="Baertsch R.A."/>
            <person name="Brent M.R."/>
            <person name="Keibler E."/>
            <person name="Flicek P."/>
            <person name="Bork P."/>
            <person name="Suyama M."/>
            <person name="Bailey J.A."/>
            <person name="Portnoy M.E."/>
            <person name="Torrents D."/>
            <person name="Chinwalla A.T."/>
            <person name="Gish W.R."/>
            <person name="Eddy S.R."/>
            <person name="McPherson J.D."/>
            <person name="Olson M.V."/>
            <person name="Eichler E.E."/>
            <person name="Green E.D."/>
            <person name="Waterston R.H."/>
            <person name="Wilson R.K."/>
        </authorList>
    </citation>
    <scope>NUCLEOTIDE SEQUENCE [LARGE SCALE GENOMIC DNA]</scope>
</reference>
<reference key="7">
    <citation type="submission" date="2005-07" db="EMBL/GenBank/DDBJ databases">
        <authorList>
            <person name="Mural R.J."/>
            <person name="Istrail S."/>
            <person name="Sutton G.G."/>
            <person name="Florea L."/>
            <person name="Halpern A.L."/>
            <person name="Mobarry C.M."/>
            <person name="Lippert R."/>
            <person name="Walenz B."/>
            <person name="Shatkay H."/>
            <person name="Dew I."/>
            <person name="Miller J.R."/>
            <person name="Flanigan M.J."/>
            <person name="Edwards N.J."/>
            <person name="Bolanos R."/>
            <person name="Fasulo D."/>
            <person name="Halldorsson B.V."/>
            <person name="Hannenhalli S."/>
            <person name="Turner R."/>
            <person name="Yooseph S."/>
            <person name="Lu F."/>
            <person name="Nusskern D.R."/>
            <person name="Shue B.C."/>
            <person name="Zheng X.H."/>
            <person name="Zhong F."/>
            <person name="Delcher A.L."/>
            <person name="Huson D.H."/>
            <person name="Kravitz S.A."/>
            <person name="Mouchard L."/>
            <person name="Reinert K."/>
            <person name="Remington K.A."/>
            <person name="Clark A.G."/>
            <person name="Waterman M.S."/>
            <person name="Eichler E.E."/>
            <person name="Adams M.D."/>
            <person name="Hunkapiller M.W."/>
            <person name="Myers E.W."/>
            <person name="Venter J.C."/>
        </authorList>
    </citation>
    <scope>NUCLEOTIDE SEQUENCE [LARGE SCALE GENOMIC DNA]</scope>
</reference>
<reference key="8">
    <citation type="journal article" date="2004" name="Genome Res.">
        <title>The status, quality, and expansion of the NIH full-length cDNA project: the Mammalian Gene Collection (MGC).</title>
        <authorList>
            <consortium name="The MGC Project Team"/>
        </authorList>
    </citation>
    <scope>NUCLEOTIDE SEQUENCE [LARGE SCALE MRNA]</scope>
    <source>
        <tissue>Brain</tissue>
        <tissue>Eye</tissue>
        <tissue>Lung</tissue>
        <tissue>Muscle</tissue>
    </source>
</reference>
<reference key="9">
    <citation type="submission" date="2010-01" db="UniProtKB">
        <authorList>
            <person name="Bienvenut W.V."/>
        </authorList>
    </citation>
    <scope>PROTEIN SEQUENCE OF 2-32; 44-63; 69-82; 111-149; 159-185; 202-217; 230-241; 248-271; 314-341; 409-426 AND 469-493</scope>
    <scope>CLEAVAGE OF INITIATOR METHIONINE</scope>
    <scope>ACETYLATION AT THR-2</scope>
    <scope>IDENTIFICATION BY MASS SPECTROMETRY</scope>
    <source>
        <tissue>Ovarian carcinoma</tissue>
    </source>
</reference>
<reference key="10">
    <citation type="submission" date="2008-12" db="UniProtKB">
        <authorList>
            <person name="Lubec G."/>
            <person name="Afjehi-Sadat L."/>
            <person name="Chen W.-Q."/>
            <person name="Sun Y."/>
        </authorList>
    </citation>
    <scope>PROTEIN SEQUENCE OF 119-149; 202-217; 230-241; 314-330 AND 380-389</scope>
    <scope>IDENTIFICATION BY MASS SPECTROMETRY</scope>
    <source>
        <tissue>Brain</tissue>
        <tissue>Cajal-Retzius cell</tissue>
        <tissue>Fetal brain cortex</tissue>
    </source>
</reference>
<reference key="11">
    <citation type="journal article" date="1986" name="J. Cell Biol.">
        <title>Intracellular localization of the 55-kD actin-bundling protein in cultured cells: spatial relationships with actin, alpha-actinin, tropomyosin, and fimbrin.</title>
        <authorList>
            <person name="Yamashiro-Matsumura S."/>
            <person name="Matsumura F."/>
        </authorList>
    </citation>
    <scope>SUBCELLULAR LOCATION</scope>
</reference>
<reference key="12">
    <citation type="journal article" date="1996" name="J. Biol. Chem.">
        <title>Phosphorylation of human fascin inhibits its actin binding and bundling activities.</title>
        <authorList>
            <person name="Yamakita Y."/>
            <person name="Ono S."/>
            <person name="Matsumura F."/>
            <person name="Yamashiro S."/>
        </authorList>
    </citation>
    <scope>PHOSPHORYLATION</scope>
</reference>
<reference key="13">
    <citation type="journal article" date="1997" name="Mol. Biol. Cell">
        <title>Characterization of cell-matrix adhesion requirements for the formation of fascin microspikes.</title>
        <authorList>
            <person name="Adams J.C."/>
        </authorList>
    </citation>
    <scope>FUNCTION</scope>
</reference>
<reference key="14">
    <citation type="journal article" date="1998" name="Mol. Biol. Cell">
        <title>Fascin, an actin-bundling protein, induces membrane protrusions and increases cell motility of epithelial cells.</title>
        <authorList>
            <person name="Yamashiro S."/>
            <person name="Yamakita Y."/>
            <person name="Ono S."/>
            <person name="Matsumura F."/>
        </authorList>
    </citation>
    <scope>FUNCTION</scope>
    <scope>SUBCELLULAR LOCATION</scope>
</reference>
<reference key="15">
    <citation type="journal article" date="1997" name="J. Biol. Chem.">
        <title>Identification of an actin binding region and a protein kinase C phosphorylation site on human fascin.</title>
        <authorList>
            <person name="Ono S."/>
            <person name="Yamakita Y."/>
            <person name="Yamashiro S."/>
            <person name="Matsudaira P.T."/>
            <person name="Gnarra J.R."/>
            <person name="Obinata T."/>
            <person name="Matsumura F."/>
        </authorList>
    </citation>
    <scope>PHOSPHORYLATION AT SER-39</scope>
    <scope>MUTAGENESIS OF SER-39</scope>
</reference>
<reference key="16">
    <citation type="journal article" date="2008" name="Proc. Natl. Acad. Sci. U.S.A.">
        <title>A quantitative atlas of mitotic phosphorylation.</title>
        <authorList>
            <person name="Dephoure N."/>
            <person name="Zhou C."/>
            <person name="Villen J."/>
            <person name="Beausoleil S.A."/>
            <person name="Bakalarski C.E."/>
            <person name="Elledge S.J."/>
            <person name="Gygi S.P."/>
        </authorList>
    </citation>
    <scope>PHOSPHORYLATION [LARGE SCALE ANALYSIS] AT SER-38</scope>
    <scope>IDENTIFICATION BY MASS SPECTROMETRY [LARGE SCALE ANALYSIS]</scope>
    <source>
        <tissue>Cervix carcinoma</tissue>
    </source>
</reference>
<reference key="17">
    <citation type="journal article" date="2010" name="Curr. Biol.">
        <title>The actin-bundling protein fascin stabilizes actin in invadopodia and potentiates protrusive invasion.</title>
        <authorList>
            <person name="Li A."/>
            <person name="Dawson J.C."/>
            <person name="Forero-Vargas M."/>
            <person name="Spence H.J."/>
            <person name="Yu X."/>
            <person name="Konig I."/>
            <person name="Anderson K."/>
            <person name="Machesky L.M."/>
        </authorList>
    </citation>
    <scope>FUNCTION</scope>
    <scope>SUBCELLULAR LOCATION</scope>
</reference>
<reference key="18">
    <citation type="journal article" date="2011" name="BMC Syst. Biol.">
        <title>Initial characterization of the human central proteome.</title>
        <authorList>
            <person name="Burkard T.R."/>
            <person name="Planyavsky M."/>
            <person name="Kaupe I."/>
            <person name="Breitwieser F.P."/>
            <person name="Buerckstuemmer T."/>
            <person name="Bennett K.L."/>
            <person name="Superti-Furga G."/>
            <person name="Colinge J."/>
        </authorList>
    </citation>
    <scope>IDENTIFICATION BY MASS SPECTROMETRY [LARGE SCALE ANALYSIS]</scope>
</reference>
<reference key="19">
    <citation type="journal article" date="2011" name="Sci. Signal.">
        <title>Neuronal growth cone retraction relies on proneurotrophin receptor signaling through Rac.</title>
        <authorList>
            <person name="Deinhardt K."/>
            <person name="Kim T."/>
            <person name="Spellman D.S."/>
            <person name="Mains R.E."/>
            <person name="Eipper B.A."/>
            <person name="Neubert T.A."/>
            <person name="Chao M.V."/>
            <person name="Hempstead B.L."/>
        </authorList>
    </citation>
    <scope>FUNCTION</scope>
    <scope>MUTAGENESIS OF 36-SER--SER-39</scope>
    <scope>PHOSPHORYLATION</scope>
</reference>
<reference key="20">
    <citation type="journal article" date="2011" name="Sci. Signal.">
        <title>System-wide temporal characterization of the proteome and phosphoproteome of human embryonic stem cell differentiation.</title>
        <authorList>
            <person name="Rigbolt K.T."/>
            <person name="Prokhorova T.A."/>
            <person name="Akimov V."/>
            <person name="Henningsen J."/>
            <person name="Johansen P.T."/>
            <person name="Kratchmarova I."/>
            <person name="Kassem M."/>
            <person name="Mann M."/>
            <person name="Olsen J.V."/>
            <person name="Blagoev B."/>
        </authorList>
    </citation>
    <scope>IDENTIFICATION BY MASS SPECTROMETRY [LARGE SCALE ANALYSIS]</scope>
</reference>
<reference key="21">
    <citation type="journal article" date="2012" name="Mol. Cell. Proteomics">
        <title>Comparative large-scale characterisation of plant vs. mammal proteins reveals similar and idiosyncratic N-alpha acetylation features.</title>
        <authorList>
            <person name="Bienvenut W.V."/>
            <person name="Sumpton D."/>
            <person name="Martinez A."/>
            <person name="Lilla S."/>
            <person name="Espagne C."/>
            <person name="Meinnel T."/>
            <person name="Giglione C."/>
        </authorList>
    </citation>
    <scope>ACETYLATION [LARGE SCALE ANALYSIS] AT THR-2</scope>
    <scope>CLEAVAGE OF INITIATOR METHIONINE [LARGE SCALE ANALYSIS]</scope>
    <scope>IDENTIFICATION BY MASS SPECTROMETRY [LARGE SCALE ANALYSIS]</scope>
</reference>
<reference key="22">
    <citation type="journal article" date="2012" name="Oncogene">
        <title>Semaphorin 5A and plexin-B3 regulate human glioma cell motility and morphology through Rac1 and the actin cytoskeleton.</title>
        <authorList>
            <person name="Li X."/>
            <person name="Law J.W."/>
            <person name="Lee A.Y."/>
        </authorList>
    </citation>
    <scope>INTERACTION WITH PLXNB3</scope>
    <scope>SUBCELLULAR LOCATION</scope>
</reference>
<reference key="23">
    <citation type="journal article" date="2013" name="J. Proteome Res.">
        <title>Toward a comprehensive characterization of a human cancer cell phosphoproteome.</title>
        <authorList>
            <person name="Zhou H."/>
            <person name="Di Palma S."/>
            <person name="Preisinger C."/>
            <person name="Peng M."/>
            <person name="Polat A.N."/>
            <person name="Heck A.J."/>
            <person name="Mohammed S."/>
        </authorList>
    </citation>
    <scope>PHOSPHORYLATION [LARGE SCALE ANALYSIS] AT SER-127; SER-234 AND THR-239</scope>
    <scope>IDENTIFICATION BY MASS SPECTROMETRY [LARGE SCALE ANALYSIS]</scope>
    <source>
        <tissue>Cervix carcinoma</tissue>
        <tissue>Erythroleukemia</tissue>
    </source>
</reference>
<reference key="24">
    <citation type="journal article" date="2014" name="J. Proteomics">
        <title>An enzyme assisted RP-RPLC approach for in-depth analysis of human liver phosphoproteome.</title>
        <authorList>
            <person name="Bian Y."/>
            <person name="Song C."/>
            <person name="Cheng K."/>
            <person name="Dong M."/>
            <person name="Wang F."/>
            <person name="Huang J."/>
            <person name="Sun D."/>
            <person name="Wang L."/>
            <person name="Ye M."/>
            <person name="Zou H."/>
        </authorList>
    </citation>
    <scope>IDENTIFICATION BY MASS SPECTROMETRY [LARGE SCALE ANALYSIS]</scope>
    <source>
        <tissue>Liver</tissue>
    </source>
</reference>
<reference key="25">
    <citation type="journal article" date="2014" name="Nat. Struct. Mol. Biol.">
        <title>Uncovering global SUMOylation signaling networks in a site-specific manner.</title>
        <authorList>
            <person name="Hendriks I.A."/>
            <person name="D'Souza R.C."/>
            <person name="Yang B."/>
            <person name="Verlaan-de Vries M."/>
            <person name="Mann M."/>
            <person name="Vertegaal A.C."/>
        </authorList>
    </citation>
    <scope>SUMOYLATION [LARGE SCALE ANALYSIS] AT LYS-399</scope>
    <scope>IDENTIFICATION BY MASS SPECTROMETRY [LARGE SCALE ANALYSIS]</scope>
</reference>
<reference key="26">
    <citation type="journal article" date="2010" name="J. Mol. Biol.">
        <title>Structure, evolutionary conservation, and conformational dynamics of Homo sapiens fascin-1, an F-actin crosslinking protein.</title>
        <authorList>
            <person name="Sedeh R.S."/>
            <person name="Fedorov A.A."/>
            <person name="Fedorov E.V."/>
            <person name="Ono S."/>
            <person name="Matsumura F."/>
            <person name="Almo S.C."/>
            <person name="Bathe M."/>
        </authorList>
    </citation>
    <scope>X-RAY CRYSTALLOGRAPHY (2.90 ANGSTROMS)</scope>
    <scope>DOMAIN</scope>
</reference>
<reference evidence="18" key="27">
    <citation type="journal article" date="2010" name="Nature">
        <title>Migrastatin analogues target fascin to block tumour metastasis.</title>
        <authorList>
            <person name="Chen L."/>
            <person name="Yang S."/>
            <person name="Jakoncic J."/>
            <person name="Zhang J.J."/>
            <person name="Huang X.Y."/>
        </authorList>
    </citation>
    <scope>X-RAY CRYSTALLOGRAPHY (1.80 ANGSTROMS)</scope>
    <scope>FUNCTION</scope>
    <scope>DOMAIN</scope>
    <scope>MUTAGENESIS OF HIS-392; LYS-471 AND ALA-488</scope>
</reference>
<reference key="28">
    <citation type="journal article" date="2011" name="Nature">
        <authorList>
            <person name="Chen L."/>
            <person name="Yang S."/>
            <person name="Jakoncic J."/>
            <person name="Zhang J.J."/>
            <person name="Huang X.Y."/>
        </authorList>
    </citation>
    <scope>ERRATUM OF PUBMED:20393565</scope>
</reference>
<reference evidence="19" key="29">
    <citation type="journal article" date="2011" name="J. Biol. Chem.">
        <title>Mechanism of actin filament bundling by fascin.</title>
        <authorList>
            <person name="Jansen S."/>
            <person name="Collins A."/>
            <person name="Yang C."/>
            <person name="Rebowski G."/>
            <person name="Svitkina T."/>
            <person name="Dominguez R."/>
        </authorList>
    </citation>
    <scope>X-RAY CRYSTALLOGRAPHY (2.00 ANGSTROMS)</scope>
    <scope>FUNCTION</scope>
    <scope>DOMAIN</scope>
    <scope>SUBCELLULAR LOCATION</scope>
    <scope>MUTAGENESIS OF LYS-22; LYS-43; ARG-100; ARG-109; 150-LYS-LYS-151; LYS-247; ARG-271; LYS-313; ARG-341; ARG-348; LYS-353; LYS-358; ARG-398 AND LYS-464</scope>
</reference>
<reference evidence="20 21 22 23" key="30">
    <citation type="journal article" date="2013" name="J. Biol. Chem.">
        <title>Molecular mechanism of fascin function in filopodial formation.</title>
        <authorList>
            <person name="Yang S."/>
            <person name="Huang F.K."/>
            <person name="Huang J."/>
            <person name="Chen S."/>
            <person name="Jakoncic J."/>
            <person name="Leo-Macias A."/>
            <person name="Diaz-Avalos R."/>
            <person name="Chen L."/>
            <person name="Zhang J.J."/>
            <person name="Huang X.Y."/>
        </authorList>
    </citation>
    <scope>X-RAY CRYSTALLOGRAPHY (2.20 ANGSTROMS)</scope>
    <scope>FUNCTION</scope>
    <scope>MUTAGENESIS OF PHE-29; SER-39; 149-ARG--ARG-151; 247-LYS--LYS-250 AND LYS-358</scope>
</reference>